<keyword id="KW-0939">Gibberellin signaling pathway</keyword>
<keyword id="KW-0328">Glycosyltransferase</keyword>
<keyword id="KW-0539">Nucleus</keyword>
<keyword id="KW-1185">Reference proteome</keyword>
<keyword id="KW-0677">Repeat</keyword>
<keyword id="KW-0802">TPR repeat</keyword>
<keyword id="KW-0808">Transferase</keyword>
<gene>
    <name type="primary">SPY</name>
    <name type="ordered locus">Os08g0559300</name>
    <name type="ordered locus">LOC_Os08g44510</name>
    <name type="ORF">P0562A06.20</name>
</gene>
<accession>Q6YZI0</accession>
<accession>Q0J3Q0</accession>
<evidence type="ECO:0000250" key="1"/>
<evidence type="ECO:0000250" key="2">
    <source>
        <dbReference type="UniProtKB" id="Q96301"/>
    </source>
</evidence>
<evidence type="ECO:0000256" key="3">
    <source>
        <dbReference type="SAM" id="MobiDB-lite"/>
    </source>
</evidence>
<evidence type="ECO:0000305" key="4"/>
<dbReference type="EC" id="2.4.1.255" evidence="2"/>
<dbReference type="EMBL" id="AP005524">
    <property type="protein sequence ID" value="BAD13137.1"/>
    <property type="molecule type" value="Genomic_DNA"/>
</dbReference>
<dbReference type="EMBL" id="AP008214">
    <property type="protein sequence ID" value="BAF24415.1"/>
    <property type="molecule type" value="Genomic_DNA"/>
</dbReference>
<dbReference type="EMBL" id="AP014964">
    <property type="protein sequence ID" value="BAT06686.1"/>
    <property type="molecule type" value="Genomic_DNA"/>
</dbReference>
<dbReference type="EMBL" id="AK065854">
    <property type="protein sequence ID" value="BAG89710.1"/>
    <property type="molecule type" value="mRNA"/>
</dbReference>
<dbReference type="RefSeq" id="XP_015649746.1">
    <property type="nucleotide sequence ID" value="XM_015794260.1"/>
</dbReference>
<dbReference type="SMR" id="Q6YZI0"/>
<dbReference type="FunCoup" id="Q6YZI0">
    <property type="interactions" value="1911"/>
</dbReference>
<dbReference type="STRING" id="39947.Q6YZI0"/>
<dbReference type="CAZy" id="GT41">
    <property type="family name" value="Glycosyltransferase Family 41"/>
</dbReference>
<dbReference type="PaxDb" id="39947-Q6YZI0"/>
<dbReference type="EnsemblPlants" id="Os08t0559300-01">
    <property type="protein sequence ID" value="Os08t0559300-01"/>
    <property type="gene ID" value="Os08g0559300"/>
</dbReference>
<dbReference type="Gramene" id="Os08t0559300-01">
    <property type="protein sequence ID" value="Os08t0559300-01"/>
    <property type="gene ID" value="Os08g0559300"/>
</dbReference>
<dbReference type="KEGG" id="dosa:Os08g0559300"/>
<dbReference type="eggNOG" id="KOG4626">
    <property type="taxonomic scope" value="Eukaryota"/>
</dbReference>
<dbReference type="HOGENOM" id="CLU_001721_4_0_1"/>
<dbReference type="InParanoid" id="Q6YZI0"/>
<dbReference type="OMA" id="CALTYCG"/>
<dbReference type="OrthoDB" id="9991317at2759"/>
<dbReference type="UniPathway" id="UPA00378"/>
<dbReference type="Proteomes" id="UP000000763">
    <property type="component" value="Chromosome 8"/>
</dbReference>
<dbReference type="Proteomes" id="UP000059680">
    <property type="component" value="Chromosome 8"/>
</dbReference>
<dbReference type="GO" id="GO:0005737">
    <property type="term" value="C:cytoplasm"/>
    <property type="evidence" value="ECO:0007669"/>
    <property type="project" value="EnsemblPlants"/>
</dbReference>
<dbReference type="GO" id="GO:0005634">
    <property type="term" value="C:nucleus"/>
    <property type="evidence" value="ECO:0007669"/>
    <property type="project" value="UniProtKB-SubCell"/>
</dbReference>
<dbReference type="GO" id="GO:0046922">
    <property type="term" value="F:peptide-O-fucosyltransferase activity"/>
    <property type="evidence" value="ECO:0007669"/>
    <property type="project" value="EnsemblPlants"/>
</dbReference>
<dbReference type="GO" id="GO:0097363">
    <property type="term" value="F:protein O-acetylglucosaminyltransferase activity"/>
    <property type="evidence" value="ECO:0007669"/>
    <property type="project" value="UniProtKB-EC"/>
</dbReference>
<dbReference type="GO" id="GO:0009736">
    <property type="term" value="P:cytokinin-activated signaling pathway"/>
    <property type="evidence" value="ECO:0007669"/>
    <property type="project" value="EnsemblPlants"/>
</dbReference>
<dbReference type="GO" id="GO:0009740">
    <property type="term" value="P:gibberellic acid mediated signaling pathway"/>
    <property type="evidence" value="ECO:0007669"/>
    <property type="project" value="UniProtKB-KW"/>
</dbReference>
<dbReference type="GO" id="GO:0009938">
    <property type="term" value="P:negative regulation of gibberellic acid mediated signaling pathway"/>
    <property type="evidence" value="ECO:0007669"/>
    <property type="project" value="EnsemblPlants"/>
</dbReference>
<dbReference type="GO" id="GO:2000377">
    <property type="term" value="P:regulation of reactive oxygen species metabolic process"/>
    <property type="evidence" value="ECO:0007669"/>
    <property type="project" value="EnsemblPlants"/>
</dbReference>
<dbReference type="Gene3D" id="3.40.50.11380">
    <property type="match status" value="1"/>
</dbReference>
<dbReference type="Gene3D" id="3.40.50.2000">
    <property type="entry name" value="Glycogen Phosphorylase B"/>
    <property type="match status" value="1"/>
</dbReference>
<dbReference type="Gene3D" id="1.25.40.10">
    <property type="entry name" value="Tetratricopeptide repeat domain"/>
    <property type="match status" value="4"/>
</dbReference>
<dbReference type="InterPro" id="IPR051939">
    <property type="entry name" value="Glycosyltr_41/O-GlcNAc_trsf"/>
</dbReference>
<dbReference type="InterPro" id="IPR029489">
    <property type="entry name" value="OGT/SEC/SPY_C"/>
</dbReference>
<dbReference type="InterPro" id="IPR006597">
    <property type="entry name" value="Sel1-like"/>
</dbReference>
<dbReference type="InterPro" id="IPR011990">
    <property type="entry name" value="TPR-like_helical_dom_sf"/>
</dbReference>
<dbReference type="InterPro" id="IPR019734">
    <property type="entry name" value="TPR_rpt"/>
</dbReference>
<dbReference type="PANTHER" id="PTHR44835:SF1">
    <property type="entry name" value="PROTEIN O-GLCNAC TRANSFERASE"/>
    <property type="match status" value="1"/>
</dbReference>
<dbReference type="PANTHER" id="PTHR44835">
    <property type="entry name" value="UDP-N-ACETYLGLUCOSAMINE--PEPTIDE N-ACETYLGLUCOSAMINYLTRANSFERASE SPINDLY-RELATED"/>
    <property type="match status" value="1"/>
</dbReference>
<dbReference type="Pfam" id="PF13844">
    <property type="entry name" value="Glyco_transf_41"/>
    <property type="match status" value="2"/>
</dbReference>
<dbReference type="Pfam" id="PF00515">
    <property type="entry name" value="TPR_1"/>
    <property type="match status" value="5"/>
</dbReference>
<dbReference type="Pfam" id="PF13432">
    <property type="entry name" value="TPR_16"/>
    <property type="match status" value="1"/>
</dbReference>
<dbReference type="SMART" id="SM00671">
    <property type="entry name" value="SEL1"/>
    <property type="match status" value="3"/>
</dbReference>
<dbReference type="SMART" id="SM00028">
    <property type="entry name" value="TPR"/>
    <property type="match status" value="11"/>
</dbReference>
<dbReference type="SUPFAM" id="SSF48452">
    <property type="entry name" value="TPR-like"/>
    <property type="match status" value="2"/>
</dbReference>
<dbReference type="PROSITE" id="PS50005">
    <property type="entry name" value="TPR"/>
    <property type="match status" value="11"/>
</dbReference>
<dbReference type="PROSITE" id="PS50293">
    <property type="entry name" value="TPR_REGION"/>
    <property type="match status" value="1"/>
</dbReference>
<proteinExistence type="evidence at transcript level"/>
<protein>
    <recommendedName>
        <fullName>Probable UDP-N-acetylglucosamine--peptide N-acetylglucosaminyltransferase SPINDLY</fullName>
        <ecNumber evidence="2">2.4.1.255</ecNumber>
    </recommendedName>
</protein>
<feature type="chain" id="PRO_0000191780" description="Probable UDP-N-acetylglucosamine--peptide N-acetylglucosaminyltransferase SPINDLY">
    <location>
        <begin position="1"/>
        <end position="927"/>
    </location>
</feature>
<feature type="repeat" description="TPR 1">
    <location>
        <begin position="34"/>
        <end position="67"/>
    </location>
</feature>
<feature type="repeat" description="TPR 2">
    <location>
        <begin position="68"/>
        <end position="101"/>
    </location>
</feature>
<feature type="repeat" description="TPR 3">
    <location>
        <begin position="102"/>
        <end position="135"/>
    </location>
</feature>
<feature type="repeat" description="TPR 4">
    <location>
        <begin position="143"/>
        <end position="176"/>
    </location>
</feature>
<feature type="repeat" description="TPR 5">
    <location>
        <begin position="177"/>
        <end position="210"/>
    </location>
</feature>
<feature type="repeat" description="TPR 6">
    <location>
        <begin position="211"/>
        <end position="244"/>
    </location>
</feature>
<feature type="repeat" description="TPR 7">
    <location>
        <begin position="252"/>
        <end position="285"/>
    </location>
</feature>
<feature type="repeat" description="TPR 8">
    <location>
        <begin position="286"/>
        <end position="319"/>
    </location>
</feature>
<feature type="repeat" description="TPR 9">
    <location>
        <begin position="320"/>
        <end position="353"/>
    </location>
</feature>
<feature type="repeat" description="TPR 10">
    <location>
        <begin position="355"/>
        <end position="387"/>
    </location>
</feature>
<feature type="repeat" description="TPR 11">
    <location>
        <begin position="388"/>
        <end position="421"/>
    </location>
</feature>
<feature type="region of interest" description="Disordered" evidence="3">
    <location>
        <begin position="1"/>
        <end position="31"/>
    </location>
</feature>
<feature type="region of interest" description="Catalytic region">
    <location>
        <begin position="422"/>
        <end position="927"/>
    </location>
</feature>
<comment type="function">
    <text evidence="1">Probable O-linked N-acetylglucosamine transferase (OGT) involved in various processes such as gibberellin (GA) signaling pathway. OGTs catalyze the addition of nucleotide-activated sugars directly onto the polypeptide through O-glycosidic linkage with the hydroxyl of serine or threonine. Probably acts by adding O-linked sugars to yet unknown proteins (By similarity).</text>
</comment>
<comment type="catalytic activity">
    <reaction evidence="2">
        <text>L-seryl-[protein] + UDP-N-acetyl-alpha-D-glucosamine = 3-O-(N-acetyl-beta-D-glucosaminyl)-L-seryl-[protein] + UDP + H(+)</text>
        <dbReference type="Rhea" id="RHEA:48904"/>
        <dbReference type="Rhea" id="RHEA-COMP:9863"/>
        <dbReference type="Rhea" id="RHEA-COMP:12251"/>
        <dbReference type="ChEBI" id="CHEBI:15378"/>
        <dbReference type="ChEBI" id="CHEBI:29999"/>
        <dbReference type="ChEBI" id="CHEBI:57705"/>
        <dbReference type="ChEBI" id="CHEBI:58223"/>
        <dbReference type="ChEBI" id="CHEBI:90838"/>
        <dbReference type="EC" id="2.4.1.255"/>
    </reaction>
</comment>
<comment type="catalytic activity">
    <reaction evidence="2">
        <text>L-threonyl-[protein] + UDP-N-acetyl-alpha-D-glucosamine = 3-O-(N-acetyl-beta-D-glucosaminyl)-L-threonyl-[protein] + UDP + H(+)</text>
        <dbReference type="Rhea" id="RHEA:48908"/>
        <dbReference type="Rhea" id="RHEA-COMP:11060"/>
        <dbReference type="Rhea" id="RHEA-COMP:12252"/>
        <dbReference type="ChEBI" id="CHEBI:15378"/>
        <dbReference type="ChEBI" id="CHEBI:30013"/>
        <dbReference type="ChEBI" id="CHEBI:57705"/>
        <dbReference type="ChEBI" id="CHEBI:58223"/>
        <dbReference type="ChEBI" id="CHEBI:90840"/>
        <dbReference type="EC" id="2.4.1.255"/>
    </reaction>
</comment>
<comment type="pathway">
    <text>Protein modification; protein glycosylation.</text>
</comment>
<comment type="subcellular location">
    <subcellularLocation>
        <location evidence="1">Nucleus</location>
    </subcellularLocation>
</comment>
<comment type="similarity">
    <text evidence="4">Belongs to the glycosyltransferase 41 family. O-GlcNAc transferase subfamily.</text>
</comment>
<name>SPY_ORYSJ</name>
<reference key="1">
    <citation type="journal article" date="2005" name="Nature">
        <title>The map-based sequence of the rice genome.</title>
        <authorList>
            <consortium name="International rice genome sequencing project (IRGSP)"/>
        </authorList>
    </citation>
    <scope>NUCLEOTIDE SEQUENCE [LARGE SCALE GENOMIC DNA]</scope>
    <source>
        <strain>cv. Nipponbare</strain>
    </source>
</reference>
<reference key="2">
    <citation type="journal article" date="2008" name="Nucleic Acids Res.">
        <title>The rice annotation project database (RAP-DB): 2008 update.</title>
        <authorList>
            <consortium name="The rice annotation project (RAP)"/>
        </authorList>
    </citation>
    <scope>GENOME REANNOTATION</scope>
    <source>
        <strain>cv. Nipponbare</strain>
    </source>
</reference>
<reference key="3">
    <citation type="journal article" date="2013" name="Rice">
        <title>Improvement of the Oryza sativa Nipponbare reference genome using next generation sequence and optical map data.</title>
        <authorList>
            <person name="Kawahara Y."/>
            <person name="de la Bastide M."/>
            <person name="Hamilton J.P."/>
            <person name="Kanamori H."/>
            <person name="McCombie W.R."/>
            <person name="Ouyang S."/>
            <person name="Schwartz D.C."/>
            <person name="Tanaka T."/>
            <person name="Wu J."/>
            <person name="Zhou S."/>
            <person name="Childs K.L."/>
            <person name="Davidson R.M."/>
            <person name="Lin H."/>
            <person name="Quesada-Ocampo L."/>
            <person name="Vaillancourt B."/>
            <person name="Sakai H."/>
            <person name="Lee S.S."/>
            <person name="Kim J."/>
            <person name="Numa H."/>
            <person name="Itoh T."/>
            <person name="Buell C.R."/>
            <person name="Matsumoto T."/>
        </authorList>
    </citation>
    <scope>GENOME REANNOTATION</scope>
    <source>
        <strain>cv. Nipponbare</strain>
    </source>
</reference>
<reference key="4">
    <citation type="journal article" date="2003" name="Science">
        <title>Collection, mapping, and annotation of over 28,000 cDNA clones from japonica rice.</title>
        <authorList>
            <consortium name="The rice full-length cDNA consortium"/>
        </authorList>
    </citation>
    <scope>NUCLEOTIDE SEQUENCE [LARGE SCALE MRNA]</scope>
    <source>
        <strain>cv. Nipponbare</strain>
    </source>
</reference>
<sequence length="927" mass="102548">MGRPGMDSSEGRESNGVVPERNGGAVPAKQQLDGKDTLRYANILRSRNKFAEALQLYNNVLEKDEANVEALIGKGICLQAQSLPMQAIECFNEAVRIDPGNACALTYCGMIYKDEGHLVEAAEAYQKARNADPSYKPAAEFLAIVLTDLGTSLKLAGNTEEGIQKYCEALEVDSHYAPAYYNLGVVYSEMMQFDLALTCYEKAALERPLYAEAYCNMGVIYKNRGELEAAIACYERCLTISPNFEIAKNNMAIALTDLGTKVKIEGDINQGVAYYKKALFYNWHYADAMYNLGVAYGEMLNFEMAIVFYELALHFNPRCAEACNNLGVIYKDRDNLDKAVECYQMALSIKPNFSQSLNNLGVVYTVQGKMDAASSMIQKAIFANSTYAEAYNNLGVLYRDAGSITSAVQAYEKCLQIDPDSRNAGQNRLLALNYIDEGFDDKLYQAHREWGKRFLKLYPQYTSWDNPKVADRPLVIGYVSPDYFTHSVSYFIEAPLAHHDYSNYKVVVYSGVVKADAKTLRFKDKVLKKGGLWRDIYGIDEKKVASLVREDKVDILVELTGHTANNKLGTMACRPAPIQVTWIGYPNTTGLPTIDYRITDSLADPPDTTQKHVEELVRLPESFLCYSPSPEAGPVCPTPAILNGFITFGSFNNLAKITPKVLQVWAKILCAVPNSRLVVKCKPFCCDSIRQKFLSTLAELGLEPLRVDLLPLIHLNHDHMQAYSLMDISLDTFPYAGTTTTCESLYMGVPCVTMAGSVHAHNVGVSLLTKVGLGRLVAKSENEYVSLALDLAADVTALQELRMSLRGLMAKSPVCDGENFTRGLESAYRNMWRRYCDGDAPALRRLDLLQEEPCSNNNKQDFDDNQVAKLADLKAQRVDAAVDGDKQSQLTAHAAVVGEVQQAPIMVNGVSSPVSSGKVEANGHISR</sequence>
<organism>
    <name type="scientific">Oryza sativa subsp. japonica</name>
    <name type="common">Rice</name>
    <dbReference type="NCBI Taxonomy" id="39947"/>
    <lineage>
        <taxon>Eukaryota</taxon>
        <taxon>Viridiplantae</taxon>
        <taxon>Streptophyta</taxon>
        <taxon>Embryophyta</taxon>
        <taxon>Tracheophyta</taxon>
        <taxon>Spermatophyta</taxon>
        <taxon>Magnoliopsida</taxon>
        <taxon>Liliopsida</taxon>
        <taxon>Poales</taxon>
        <taxon>Poaceae</taxon>
        <taxon>BOP clade</taxon>
        <taxon>Oryzoideae</taxon>
        <taxon>Oryzeae</taxon>
        <taxon>Oryzinae</taxon>
        <taxon>Oryza</taxon>
        <taxon>Oryza sativa</taxon>
    </lineage>
</organism>